<gene>
    <name type="primary">OPG112</name>
    <name type="ORF">MPXVgp097</name>
</gene>
<evidence type="ECO:0000250" key="1">
    <source>
        <dbReference type="UniProtKB" id="P08586"/>
    </source>
</evidence>
<evidence type="ECO:0000255" key="2"/>
<evidence type="ECO:0000305" key="3"/>
<proteinExistence type="evidence at transcript level"/>
<keyword id="KW-1035">Host cytoplasm</keyword>
<keyword id="KW-1043">Host membrane</keyword>
<keyword id="KW-0472">Membrane</keyword>
<keyword id="KW-1185">Reference proteome</keyword>
<keyword id="KW-0812">Transmembrane</keyword>
<keyword id="KW-1133">Transmembrane helix</keyword>
<dbReference type="EMBL" id="MT903340">
    <property type="protein sequence ID" value="QNP12967.1"/>
    <property type="molecule type" value="Genomic_DNA"/>
</dbReference>
<dbReference type="RefSeq" id="YP_010377094.1">
    <property type="nucleotide sequence ID" value="NC_063383.1"/>
</dbReference>
<dbReference type="SMR" id="A0A7H0DN84"/>
<dbReference type="GeneID" id="72551507"/>
<dbReference type="Proteomes" id="UP000516359">
    <property type="component" value="Genome"/>
</dbReference>
<dbReference type="GO" id="GO:0030430">
    <property type="term" value="C:host cell cytoplasm"/>
    <property type="evidence" value="ECO:0007669"/>
    <property type="project" value="UniProtKB-SubCell"/>
</dbReference>
<dbReference type="GO" id="GO:0033644">
    <property type="term" value="C:host cell membrane"/>
    <property type="evidence" value="ECO:0007669"/>
    <property type="project" value="UniProtKB-SubCell"/>
</dbReference>
<dbReference type="GO" id="GO:0016020">
    <property type="term" value="C:membrane"/>
    <property type="evidence" value="ECO:0007669"/>
    <property type="project" value="UniProtKB-KW"/>
</dbReference>
<dbReference type="InterPro" id="IPR006872">
    <property type="entry name" value="Poxvirus_H7"/>
</dbReference>
<dbReference type="Pfam" id="PF04787">
    <property type="entry name" value="Pox_H7"/>
    <property type="match status" value="1"/>
</dbReference>
<organismHost>
    <name type="scientific">Cynomys gunnisoni</name>
    <name type="common">Gunnison's prairie dog</name>
    <name type="synonym">Spermophilus gunnisoni</name>
    <dbReference type="NCBI Taxonomy" id="45479"/>
</organismHost>
<organismHost>
    <name type="scientific">Cynomys leucurus</name>
    <name type="common">White-tailed prairie dog</name>
    <dbReference type="NCBI Taxonomy" id="99825"/>
</organismHost>
<organismHost>
    <name type="scientific">Cynomys ludovicianus</name>
    <name type="common">Black-tailed prairie dog</name>
    <dbReference type="NCBI Taxonomy" id="45480"/>
</organismHost>
<organismHost>
    <name type="scientific">Cynomys mexicanus</name>
    <name type="common">Mexican prairie dog</name>
    <dbReference type="NCBI Taxonomy" id="99826"/>
</organismHost>
<organismHost>
    <name type="scientific">Cynomys parvidens</name>
    <name type="common">Utah prairie dog</name>
    <dbReference type="NCBI Taxonomy" id="99827"/>
</organismHost>
<organismHost>
    <name type="scientific">Gliridae</name>
    <name type="common">dormice</name>
    <dbReference type="NCBI Taxonomy" id="30650"/>
</organismHost>
<organismHost>
    <name type="scientific">Heliosciurus ruwenzorii</name>
    <name type="common">Ruwenzori sun squirrel</name>
    <dbReference type="NCBI Taxonomy" id="226685"/>
</organismHost>
<organismHost>
    <name type="scientific">Homo sapiens</name>
    <name type="common">Human</name>
    <dbReference type="NCBI Taxonomy" id="9606"/>
</organismHost>
<organismHost>
    <name type="scientific">Mus musculus</name>
    <name type="common">Mouse</name>
    <dbReference type="NCBI Taxonomy" id="10090"/>
</organismHost>
<comment type="function">
    <text evidence="1">Contributes to the formation of crescents and immature virions (IV). Interacts with phosphatidylinositol-3-phosphate (PI3P) and phosphatidylinositol-4-phosphate (PI4P) lipids in order to form virion membranes. Mechanistically, mediates proper formation of OPG125-hexamers, and hence the honey comb lattice and spherical immature virus.</text>
</comment>
<comment type="subcellular location">
    <subcellularLocation>
        <location evidence="1">Host membrane</location>
        <topology evidence="1">Single-pass membrane protein</topology>
    </subcellularLocation>
    <subcellularLocation>
        <location evidence="1">Host cytoplasm</location>
    </subcellularLocation>
    <text evidence="1">Probably transitorily part of the membrane of crescents during immature virions formation. Not incorporated into virions. Probably synthesized, but not retained in viral factories.</text>
</comment>
<comment type="induction">
    <text>Expressed in the late phase of the viral replicative cycle.</text>
</comment>
<comment type="similarity">
    <text evidence="3">Belongs to the orthopoxvirus OPG112 family.</text>
</comment>
<organism>
    <name type="scientific">Monkeypox virus</name>
    <dbReference type="NCBI Taxonomy" id="10244"/>
    <lineage>
        <taxon>Viruses</taxon>
        <taxon>Varidnaviria</taxon>
        <taxon>Bamfordvirae</taxon>
        <taxon>Nucleocytoviricota</taxon>
        <taxon>Pokkesviricetes</taxon>
        <taxon>Chitovirales</taxon>
        <taxon>Poxviridae</taxon>
        <taxon>Chordopoxvirinae</taxon>
        <taxon>Orthopoxvirus</taxon>
    </lineage>
</organism>
<reference key="1">
    <citation type="journal article" date="2022" name="J. Infect. Dis.">
        <title>Exportation of Monkeypox virus from the African continent.</title>
        <authorList>
            <person name="Mauldin M.R."/>
            <person name="McCollum A.M."/>
            <person name="Nakazawa Y.J."/>
            <person name="Mandra A."/>
            <person name="Whitehouse E.R."/>
            <person name="Davidson W."/>
            <person name="Zhao H."/>
            <person name="Gao J."/>
            <person name="Li Y."/>
            <person name="Doty J."/>
            <person name="Yinka-Ogunleye A."/>
            <person name="Akinpelu A."/>
            <person name="Aruna O."/>
            <person name="Naidoo D."/>
            <person name="Lewandowski K."/>
            <person name="Afrough B."/>
            <person name="Graham V."/>
            <person name="Aarons E."/>
            <person name="Hewson R."/>
            <person name="Vipond R."/>
            <person name="Dunning J."/>
            <person name="Chand M."/>
            <person name="Brown C."/>
            <person name="Cohen-Gihon I."/>
            <person name="Erez N."/>
            <person name="Shifman O."/>
            <person name="Israeli O."/>
            <person name="Sharon M."/>
            <person name="Schwartz E."/>
            <person name="Beth-Din A."/>
            <person name="Zvi A."/>
            <person name="Mak T.M."/>
            <person name="Ng Y.K."/>
            <person name="Cui L."/>
            <person name="Lin R.T.P."/>
            <person name="Olson V.A."/>
            <person name="Brooks T."/>
            <person name="Paran N."/>
            <person name="Ihekweazu C."/>
            <person name="Reynolds M.G."/>
        </authorList>
    </citation>
    <scope>NUCLEOTIDE SEQUENCE [LARGE SCALE GENOMIC DNA]</scope>
    <source>
        <strain>MPXV-M5312_HM12_Rivers</strain>
    </source>
</reference>
<name>PG112_MONPV</name>
<sequence length="146" mass="16987">MEMDKRMKSLAMTAFFGELNTLDIMALIMSIFKHHPNNTIFSVDKDGQFMIDFEYDNYKASQYLDLTLTPISGNECKTHASSIAEQLACVDIIKEDISEYIKTTPRLKRFIKKYRNRSYTRISRDTEKLKIALAKGIDYEYIKDAC</sequence>
<feature type="chain" id="PRO_0000457427" description="Late protein OPG112">
    <location>
        <begin position="1"/>
        <end position="146"/>
    </location>
</feature>
<feature type="transmembrane region" description="Helical" evidence="2">
    <location>
        <begin position="10"/>
        <end position="31"/>
    </location>
</feature>
<accession>A0A7H0DN84</accession>
<protein>
    <recommendedName>
        <fullName>Late protein OPG112</fullName>
    </recommendedName>
</protein>